<reference key="1">
    <citation type="submission" date="2008-01" db="EMBL/GenBank/DDBJ databases">
        <title>Complete sequence of Shewanella halifaxensis HAW-EB4.</title>
        <authorList>
            <consortium name="US DOE Joint Genome Institute"/>
            <person name="Copeland A."/>
            <person name="Lucas S."/>
            <person name="Lapidus A."/>
            <person name="Glavina del Rio T."/>
            <person name="Dalin E."/>
            <person name="Tice H."/>
            <person name="Bruce D."/>
            <person name="Goodwin L."/>
            <person name="Pitluck S."/>
            <person name="Sims D."/>
            <person name="Brettin T."/>
            <person name="Detter J.C."/>
            <person name="Han C."/>
            <person name="Kuske C.R."/>
            <person name="Schmutz J."/>
            <person name="Larimer F."/>
            <person name="Land M."/>
            <person name="Hauser L."/>
            <person name="Kyrpides N."/>
            <person name="Kim E."/>
            <person name="Zhao J.-S."/>
            <person name="Richardson P."/>
        </authorList>
    </citation>
    <scope>NUCLEOTIDE SEQUENCE [LARGE SCALE GENOMIC DNA]</scope>
    <source>
        <strain>HAW-EB4</strain>
    </source>
</reference>
<comment type="function">
    <text evidence="1">Poorly processive, error-prone DNA polymerase involved in untargeted mutagenesis. Copies undamaged DNA at stalled replication forks, which arise in vivo from mismatched or misaligned primer ends. These misaligned primers can be extended by PolIV. Exhibits no 3'-5' exonuclease (proofreading) activity. May be involved in translesional synthesis, in conjunction with the beta clamp from PolIII.</text>
</comment>
<comment type="catalytic activity">
    <reaction evidence="1">
        <text>DNA(n) + a 2'-deoxyribonucleoside 5'-triphosphate = DNA(n+1) + diphosphate</text>
        <dbReference type="Rhea" id="RHEA:22508"/>
        <dbReference type="Rhea" id="RHEA-COMP:17339"/>
        <dbReference type="Rhea" id="RHEA-COMP:17340"/>
        <dbReference type="ChEBI" id="CHEBI:33019"/>
        <dbReference type="ChEBI" id="CHEBI:61560"/>
        <dbReference type="ChEBI" id="CHEBI:173112"/>
        <dbReference type="EC" id="2.7.7.7"/>
    </reaction>
</comment>
<comment type="cofactor">
    <cofactor evidence="1">
        <name>Mg(2+)</name>
        <dbReference type="ChEBI" id="CHEBI:18420"/>
    </cofactor>
    <text evidence="1">Binds 2 magnesium ions per subunit.</text>
</comment>
<comment type="subunit">
    <text evidence="1">Monomer.</text>
</comment>
<comment type="subcellular location">
    <subcellularLocation>
        <location evidence="1">Cytoplasm</location>
    </subcellularLocation>
</comment>
<comment type="similarity">
    <text evidence="1">Belongs to the DNA polymerase type-Y family.</text>
</comment>
<accession>B0TQD1</accession>
<sequence>MQKIIHVDMDCFYAAVEMRDFPELRGKPIAVGGRSDRRGVISTCNYEARQFGVRSAMASGYALKLCPDLILVPGRMQVYKEVSNQIRAVFERYTDLIEPLSLDEAYLDVTESSHCKGSATLMAEAIRAEILAETGLTASAGIAPVKFLAKIASDLNKPNGQYVIRPEMIEEFVKTLPLIKIPGVGKVTAKKLADLGLHTCSDIQAYPEPKLVERFGKFGSVLIERSKGIDKRAILPNRERKSVGVETTLAKDIHTLEQCRAVMPQLIQELGARVSRSAKDRAINKQVVKLKFEDFKQTTIEHRSDEISVNLFYQLLEQAMERQHERGIRLLGVSVGLASNSIASEQADVDSSQMDLGF</sequence>
<dbReference type="EC" id="2.7.7.7" evidence="1"/>
<dbReference type="EMBL" id="CP000931">
    <property type="protein sequence ID" value="ABZ77723.1"/>
    <property type="molecule type" value="Genomic_DNA"/>
</dbReference>
<dbReference type="RefSeq" id="WP_012278246.1">
    <property type="nucleotide sequence ID" value="NC_010334.1"/>
</dbReference>
<dbReference type="SMR" id="B0TQD1"/>
<dbReference type="STRING" id="458817.Shal_3176"/>
<dbReference type="KEGG" id="shl:Shal_3176"/>
<dbReference type="eggNOG" id="COG0389">
    <property type="taxonomic scope" value="Bacteria"/>
</dbReference>
<dbReference type="HOGENOM" id="CLU_012348_1_2_6"/>
<dbReference type="OrthoDB" id="9808813at2"/>
<dbReference type="Proteomes" id="UP000001317">
    <property type="component" value="Chromosome"/>
</dbReference>
<dbReference type="GO" id="GO:0005829">
    <property type="term" value="C:cytosol"/>
    <property type="evidence" value="ECO:0007669"/>
    <property type="project" value="TreeGrafter"/>
</dbReference>
<dbReference type="GO" id="GO:0003684">
    <property type="term" value="F:damaged DNA binding"/>
    <property type="evidence" value="ECO:0007669"/>
    <property type="project" value="InterPro"/>
</dbReference>
<dbReference type="GO" id="GO:0003887">
    <property type="term" value="F:DNA-directed DNA polymerase activity"/>
    <property type="evidence" value="ECO:0007669"/>
    <property type="project" value="UniProtKB-UniRule"/>
</dbReference>
<dbReference type="GO" id="GO:0000287">
    <property type="term" value="F:magnesium ion binding"/>
    <property type="evidence" value="ECO:0007669"/>
    <property type="project" value="UniProtKB-UniRule"/>
</dbReference>
<dbReference type="GO" id="GO:0006261">
    <property type="term" value="P:DNA-templated DNA replication"/>
    <property type="evidence" value="ECO:0007669"/>
    <property type="project" value="UniProtKB-UniRule"/>
</dbReference>
<dbReference type="GO" id="GO:0042276">
    <property type="term" value="P:error-prone translesion synthesis"/>
    <property type="evidence" value="ECO:0007669"/>
    <property type="project" value="TreeGrafter"/>
</dbReference>
<dbReference type="GO" id="GO:0009432">
    <property type="term" value="P:SOS response"/>
    <property type="evidence" value="ECO:0007669"/>
    <property type="project" value="TreeGrafter"/>
</dbReference>
<dbReference type="CDD" id="cd03586">
    <property type="entry name" value="PolY_Pol_IV_kappa"/>
    <property type="match status" value="1"/>
</dbReference>
<dbReference type="FunFam" id="1.10.150.20:FF:000019">
    <property type="entry name" value="DNA polymerase IV"/>
    <property type="match status" value="1"/>
</dbReference>
<dbReference type="FunFam" id="3.30.70.270:FF:000002">
    <property type="entry name" value="DNA polymerase IV"/>
    <property type="match status" value="1"/>
</dbReference>
<dbReference type="FunFam" id="3.40.1170.60:FF:000001">
    <property type="entry name" value="DNA polymerase IV"/>
    <property type="match status" value="1"/>
</dbReference>
<dbReference type="Gene3D" id="3.30.70.270">
    <property type="match status" value="1"/>
</dbReference>
<dbReference type="Gene3D" id="3.40.1170.60">
    <property type="match status" value="1"/>
</dbReference>
<dbReference type="Gene3D" id="1.10.150.20">
    <property type="entry name" value="5' to 3' exonuclease, C-terminal subdomain"/>
    <property type="match status" value="1"/>
</dbReference>
<dbReference type="Gene3D" id="3.30.1490.100">
    <property type="entry name" value="DNA polymerase, Y-family, little finger domain"/>
    <property type="match status" value="1"/>
</dbReference>
<dbReference type="HAMAP" id="MF_01113">
    <property type="entry name" value="DNApol_IV"/>
    <property type="match status" value="1"/>
</dbReference>
<dbReference type="InterPro" id="IPR043502">
    <property type="entry name" value="DNA/RNA_pol_sf"/>
</dbReference>
<dbReference type="InterPro" id="IPR036775">
    <property type="entry name" value="DNA_pol_Y-fam_lit_finger_sf"/>
</dbReference>
<dbReference type="InterPro" id="IPR017961">
    <property type="entry name" value="DNA_pol_Y-fam_little_finger"/>
</dbReference>
<dbReference type="InterPro" id="IPR050116">
    <property type="entry name" value="DNA_polymerase-Y"/>
</dbReference>
<dbReference type="InterPro" id="IPR022880">
    <property type="entry name" value="DNApol_IV"/>
</dbReference>
<dbReference type="InterPro" id="IPR053848">
    <property type="entry name" value="IMS_HHH_1"/>
</dbReference>
<dbReference type="InterPro" id="IPR043128">
    <property type="entry name" value="Rev_trsase/Diguanyl_cyclase"/>
</dbReference>
<dbReference type="InterPro" id="IPR001126">
    <property type="entry name" value="UmuC"/>
</dbReference>
<dbReference type="NCBIfam" id="NF002677">
    <property type="entry name" value="PRK02406.1"/>
    <property type="match status" value="1"/>
</dbReference>
<dbReference type="PANTHER" id="PTHR11076:SF33">
    <property type="entry name" value="DNA POLYMERASE KAPPA"/>
    <property type="match status" value="1"/>
</dbReference>
<dbReference type="PANTHER" id="PTHR11076">
    <property type="entry name" value="DNA REPAIR POLYMERASE UMUC / TRANSFERASE FAMILY MEMBER"/>
    <property type="match status" value="1"/>
</dbReference>
<dbReference type="Pfam" id="PF00817">
    <property type="entry name" value="IMS"/>
    <property type="match status" value="1"/>
</dbReference>
<dbReference type="Pfam" id="PF11799">
    <property type="entry name" value="IMS_C"/>
    <property type="match status" value="1"/>
</dbReference>
<dbReference type="Pfam" id="PF21999">
    <property type="entry name" value="IMS_HHH_1"/>
    <property type="match status" value="1"/>
</dbReference>
<dbReference type="SUPFAM" id="SSF56672">
    <property type="entry name" value="DNA/RNA polymerases"/>
    <property type="match status" value="1"/>
</dbReference>
<dbReference type="SUPFAM" id="SSF100879">
    <property type="entry name" value="Lesion bypass DNA polymerase (Y-family), little finger domain"/>
    <property type="match status" value="1"/>
</dbReference>
<dbReference type="PROSITE" id="PS50173">
    <property type="entry name" value="UMUC"/>
    <property type="match status" value="1"/>
</dbReference>
<proteinExistence type="inferred from homology"/>
<organism>
    <name type="scientific">Shewanella halifaxensis (strain HAW-EB4)</name>
    <dbReference type="NCBI Taxonomy" id="458817"/>
    <lineage>
        <taxon>Bacteria</taxon>
        <taxon>Pseudomonadati</taxon>
        <taxon>Pseudomonadota</taxon>
        <taxon>Gammaproteobacteria</taxon>
        <taxon>Alteromonadales</taxon>
        <taxon>Shewanellaceae</taxon>
        <taxon>Shewanella</taxon>
    </lineage>
</organism>
<evidence type="ECO:0000255" key="1">
    <source>
        <dbReference type="HAMAP-Rule" id="MF_01113"/>
    </source>
</evidence>
<feature type="chain" id="PRO_1000084931" description="DNA polymerase IV">
    <location>
        <begin position="1"/>
        <end position="358"/>
    </location>
</feature>
<feature type="domain" description="UmuC" evidence="1">
    <location>
        <begin position="4"/>
        <end position="185"/>
    </location>
</feature>
<feature type="active site" evidence="1">
    <location>
        <position position="104"/>
    </location>
</feature>
<feature type="binding site" evidence="1">
    <location>
        <position position="8"/>
    </location>
    <ligand>
        <name>Mg(2+)</name>
        <dbReference type="ChEBI" id="CHEBI:18420"/>
    </ligand>
</feature>
<feature type="binding site" evidence="1">
    <location>
        <position position="103"/>
    </location>
    <ligand>
        <name>Mg(2+)</name>
        <dbReference type="ChEBI" id="CHEBI:18420"/>
    </ligand>
</feature>
<feature type="site" description="Substrate discrimination" evidence="1">
    <location>
        <position position="13"/>
    </location>
</feature>
<gene>
    <name evidence="1" type="primary">dinB</name>
    <name type="ordered locus">Shal_3176</name>
</gene>
<name>DPO4_SHEHH</name>
<protein>
    <recommendedName>
        <fullName evidence="1">DNA polymerase IV</fullName>
        <shortName evidence="1">Pol IV</shortName>
        <ecNumber evidence="1">2.7.7.7</ecNumber>
    </recommendedName>
</protein>
<keyword id="KW-0963">Cytoplasm</keyword>
<keyword id="KW-0227">DNA damage</keyword>
<keyword id="KW-0234">DNA repair</keyword>
<keyword id="KW-0235">DNA replication</keyword>
<keyword id="KW-0238">DNA-binding</keyword>
<keyword id="KW-0239">DNA-directed DNA polymerase</keyword>
<keyword id="KW-0460">Magnesium</keyword>
<keyword id="KW-0479">Metal-binding</keyword>
<keyword id="KW-0515">Mutator protein</keyword>
<keyword id="KW-0548">Nucleotidyltransferase</keyword>
<keyword id="KW-0808">Transferase</keyword>